<feature type="chain" id="PRO_1000204584" description="Glycine--tRNA ligase alpha subunit">
    <location>
        <begin position="1"/>
        <end position="290"/>
    </location>
</feature>
<keyword id="KW-0030">Aminoacyl-tRNA synthetase</keyword>
<keyword id="KW-0067">ATP-binding</keyword>
<keyword id="KW-0963">Cytoplasm</keyword>
<keyword id="KW-0436">Ligase</keyword>
<keyword id="KW-0547">Nucleotide-binding</keyword>
<keyword id="KW-0648">Protein biosynthesis</keyword>
<keyword id="KW-1185">Reference proteome</keyword>
<reference key="1">
    <citation type="submission" date="2009-06" db="EMBL/GenBank/DDBJ databases">
        <title>Complete sequence of Desulfovibrio salexigens DSM 2638.</title>
        <authorList>
            <consortium name="US DOE Joint Genome Institute"/>
            <person name="Lucas S."/>
            <person name="Copeland A."/>
            <person name="Lapidus A."/>
            <person name="Glavina del Rio T."/>
            <person name="Tice H."/>
            <person name="Bruce D."/>
            <person name="Goodwin L."/>
            <person name="Pitluck S."/>
            <person name="Munk A.C."/>
            <person name="Brettin T."/>
            <person name="Detter J.C."/>
            <person name="Han C."/>
            <person name="Tapia R."/>
            <person name="Larimer F."/>
            <person name="Land M."/>
            <person name="Hauser L."/>
            <person name="Kyrpides N."/>
            <person name="Anderson I."/>
            <person name="Wall J.D."/>
            <person name="Arkin A.P."/>
            <person name="Dehal P."/>
            <person name="Chivian D."/>
            <person name="Giles B."/>
            <person name="Hazen T.C."/>
        </authorList>
    </citation>
    <scope>NUCLEOTIDE SEQUENCE [LARGE SCALE GENOMIC DNA]</scope>
    <source>
        <strain>ATCC 14822 / DSM 2638 / NCIMB 8403 / VKM B-1763</strain>
    </source>
</reference>
<name>SYGA_MARSD</name>
<evidence type="ECO:0000255" key="1">
    <source>
        <dbReference type="HAMAP-Rule" id="MF_00254"/>
    </source>
</evidence>
<proteinExistence type="inferred from homology"/>
<gene>
    <name evidence="1" type="primary">glyQ</name>
    <name type="ordered locus">Desal_1983</name>
</gene>
<organism>
    <name type="scientific">Maridesulfovibrio salexigens (strain ATCC 14822 / DSM 2638 / NCIMB 8403 / VKM B-1763)</name>
    <name type="common">Desulfovibrio salexigens</name>
    <dbReference type="NCBI Taxonomy" id="526222"/>
    <lineage>
        <taxon>Bacteria</taxon>
        <taxon>Pseudomonadati</taxon>
        <taxon>Thermodesulfobacteriota</taxon>
        <taxon>Desulfovibrionia</taxon>
        <taxon>Desulfovibrionales</taxon>
        <taxon>Desulfovibrionaceae</taxon>
        <taxon>Maridesulfovibrio</taxon>
    </lineage>
</organism>
<protein>
    <recommendedName>
        <fullName evidence="1">Glycine--tRNA ligase alpha subunit</fullName>
        <ecNumber evidence="1">6.1.1.14</ecNumber>
    </recommendedName>
    <alternativeName>
        <fullName evidence="1">Glycyl-tRNA synthetase alpha subunit</fullName>
        <shortName evidence="1">GlyRS</shortName>
    </alternativeName>
</protein>
<comment type="catalytic activity">
    <reaction evidence="1">
        <text>tRNA(Gly) + glycine + ATP = glycyl-tRNA(Gly) + AMP + diphosphate</text>
        <dbReference type="Rhea" id="RHEA:16013"/>
        <dbReference type="Rhea" id="RHEA-COMP:9664"/>
        <dbReference type="Rhea" id="RHEA-COMP:9683"/>
        <dbReference type="ChEBI" id="CHEBI:30616"/>
        <dbReference type="ChEBI" id="CHEBI:33019"/>
        <dbReference type="ChEBI" id="CHEBI:57305"/>
        <dbReference type="ChEBI" id="CHEBI:78442"/>
        <dbReference type="ChEBI" id="CHEBI:78522"/>
        <dbReference type="ChEBI" id="CHEBI:456215"/>
        <dbReference type="EC" id="6.1.1.14"/>
    </reaction>
</comment>
<comment type="subunit">
    <text evidence="1">Tetramer of two alpha and two beta subunits.</text>
</comment>
<comment type="subcellular location">
    <subcellularLocation>
        <location evidence="1">Cytoplasm</location>
    </subcellularLocation>
</comment>
<comment type="similarity">
    <text evidence="1">Belongs to the class-II aminoacyl-tRNA synthetase family.</text>
</comment>
<accession>C6BV68</accession>
<sequence length="290" mass="33535">MNFQDVILKLQDFWSDYGCCIVQPLDIEVGAGTFNPSTFFRVIGPEPWNTAYVEPSRRPTDGRYGENPNRLQHYFQFQVILKPSPDDVQDLYLKSLEVIGIDAKEHDIRFVEDDWESPTLGAWGLGWEVWLNGMEVTQFTYFQQVGGIDLKPVSVELTYGLERLCMYLQGVESVYDLKWNDKVTYGQIFYQNEVEQSKYNFELSDASMLLDLFDKYEAESKKLCEEGLPRPAYEYCLKCSHTFNMLDARGAISITERATYIGRVRNLASAAAKLYAEERENLNYPMLDND</sequence>
<dbReference type="EC" id="6.1.1.14" evidence="1"/>
<dbReference type="EMBL" id="CP001649">
    <property type="protein sequence ID" value="ACS80043.1"/>
    <property type="molecule type" value="Genomic_DNA"/>
</dbReference>
<dbReference type="RefSeq" id="WP_015851859.1">
    <property type="nucleotide sequence ID" value="NC_012881.1"/>
</dbReference>
<dbReference type="SMR" id="C6BV68"/>
<dbReference type="STRING" id="526222.Desal_1983"/>
<dbReference type="KEGG" id="dsa:Desal_1983"/>
<dbReference type="eggNOG" id="COG0752">
    <property type="taxonomic scope" value="Bacteria"/>
</dbReference>
<dbReference type="HOGENOM" id="CLU_057066_1_0_7"/>
<dbReference type="OrthoDB" id="9802183at2"/>
<dbReference type="Proteomes" id="UP000002601">
    <property type="component" value="Chromosome"/>
</dbReference>
<dbReference type="GO" id="GO:0005829">
    <property type="term" value="C:cytosol"/>
    <property type="evidence" value="ECO:0007669"/>
    <property type="project" value="TreeGrafter"/>
</dbReference>
<dbReference type="GO" id="GO:0005524">
    <property type="term" value="F:ATP binding"/>
    <property type="evidence" value="ECO:0007669"/>
    <property type="project" value="UniProtKB-UniRule"/>
</dbReference>
<dbReference type="GO" id="GO:0004820">
    <property type="term" value="F:glycine-tRNA ligase activity"/>
    <property type="evidence" value="ECO:0007669"/>
    <property type="project" value="UniProtKB-UniRule"/>
</dbReference>
<dbReference type="GO" id="GO:0006426">
    <property type="term" value="P:glycyl-tRNA aminoacylation"/>
    <property type="evidence" value="ECO:0007669"/>
    <property type="project" value="UniProtKB-UniRule"/>
</dbReference>
<dbReference type="CDD" id="cd00733">
    <property type="entry name" value="GlyRS_alpha_core"/>
    <property type="match status" value="1"/>
</dbReference>
<dbReference type="FunFam" id="3.30.930.10:FF:000006">
    <property type="entry name" value="Glycine--tRNA ligase alpha subunit"/>
    <property type="match status" value="1"/>
</dbReference>
<dbReference type="Gene3D" id="3.30.930.10">
    <property type="entry name" value="Bira Bifunctional Protein, Domain 2"/>
    <property type="match status" value="1"/>
</dbReference>
<dbReference type="Gene3D" id="1.20.58.180">
    <property type="entry name" value="Class II aaRS and biotin synthetases, domain 2"/>
    <property type="match status" value="1"/>
</dbReference>
<dbReference type="HAMAP" id="MF_00254">
    <property type="entry name" value="Gly_tRNA_synth_alpha"/>
    <property type="match status" value="1"/>
</dbReference>
<dbReference type="InterPro" id="IPR045864">
    <property type="entry name" value="aa-tRNA-synth_II/BPL/LPL"/>
</dbReference>
<dbReference type="InterPro" id="IPR006194">
    <property type="entry name" value="Gly-tRNA-synth_heterodimer"/>
</dbReference>
<dbReference type="InterPro" id="IPR002310">
    <property type="entry name" value="Gly-tRNA_ligase_asu"/>
</dbReference>
<dbReference type="NCBIfam" id="TIGR00388">
    <property type="entry name" value="glyQ"/>
    <property type="match status" value="1"/>
</dbReference>
<dbReference type="NCBIfam" id="NF006827">
    <property type="entry name" value="PRK09348.1"/>
    <property type="match status" value="1"/>
</dbReference>
<dbReference type="PANTHER" id="PTHR30075:SF2">
    <property type="entry name" value="GLYCINE--TRNA LIGASE, CHLOROPLASTIC_MITOCHONDRIAL 2"/>
    <property type="match status" value="1"/>
</dbReference>
<dbReference type="PANTHER" id="PTHR30075">
    <property type="entry name" value="GLYCYL-TRNA SYNTHETASE"/>
    <property type="match status" value="1"/>
</dbReference>
<dbReference type="Pfam" id="PF02091">
    <property type="entry name" value="tRNA-synt_2e"/>
    <property type="match status" value="1"/>
</dbReference>
<dbReference type="PRINTS" id="PR01044">
    <property type="entry name" value="TRNASYNTHGA"/>
</dbReference>
<dbReference type="SUPFAM" id="SSF55681">
    <property type="entry name" value="Class II aaRS and biotin synthetases"/>
    <property type="match status" value="1"/>
</dbReference>
<dbReference type="PROSITE" id="PS50861">
    <property type="entry name" value="AA_TRNA_LIGASE_II_GLYAB"/>
    <property type="match status" value="1"/>
</dbReference>